<dbReference type="EC" id="3.5.1.16" evidence="1"/>
<dbReference type="EMBL" id="AE016795">
    <property type="protein sequence ID" value="AAO09819.1"/>
    <property type="molecule type" value="Genomic_DNA"/>
</dbReference>
<dbReference type="RefSeq" id="WP_011079344.1">
    <property type="nucleotide sequence ID" value="NC_004459.3"/>
</dbReference>
<dbReference type="SMR" id="Q8DCN1"/>
<dbReference type="KEGG" id="vvu:VV1_1370"/>
<dbReference type="HOGENOM" id="CLU_021802_2_4_6"/>
<dbReference type="UniPathway" id="UPA00068">
    <property type="reaction ID" value="UER00110"/>
</dbReference>
<dbReference type="Proteomes" id="UP000002275">
    <property type="component" value="Chromosome 1"/>
</dbReference>
<dbReference type="GO" id="GO:0005737">
    <property type="term" value="C:cytoplasm"/>
    <property type="evidence" value="ECO:0007669"/>
    <property type="project" value="UniProtKB-SubCell"/>
</dbReference>
<dbReference type="GO" id="GO:0008777">
    <property type="term" value="F:acetylornithine deacetylase activity"/>
    <property type="evidence" value="ECO:0007669"/>
    <property type="project" value="UniProtKB-UniRule"/>
</dbReference>
<dbReference type="GO" id="GO:0008270">
    <property type="term" value="F:zinc ion binding"/>
    <property type="evidence" value="ECO:0007669"/>
    <property type="project" value="UniProtKB-UniRule"/>
</dbReference>
<dbReference type="GO" id="GO:0006526">
    <property type="term" value="P:L-arginine biosynthetic process"/>
    <property type="evidence" value="ECO:0007669"/>
    <property type="project" value="UniProtKB-UniRule"/>
</dbReference>
<dbReference type="CDD" id="cd03894">
    <property type="entry name" value="M20_ArgE"/>
    <property type="match status" value="1"/>
</dbReference>
<dbReference type="FunFam" id="3.30.70.360:FF:000003">
    <property type="entry name" value="Acetylornithine deacetylase"/>
    <property type="match status" value="1"/>
</dbReference>
<dbReference type="Gene3D" id="3.30.70.360">
    <property type="match status" value="1"/>
</dbReference>
<dbReference type="Gene3D" id="3.40.630.10">
    <property type="entry name" value="Zn peptidases"/>
    <property type="match status" value="1"/>
</dbReference>
<dbReference type="HAMAP" id="MF_01108">
    <property type="entry name" value="ArgE"/>
    <property type="match status" value="1"/>
</dbReference>
<dbReference type="InterPro" id="IPR010169">
    <property type="entry name" value="AcOrn-deacetyl"/>
</dbReference>
<dbReference type="InterPro" id="IPR001261">
    <property type="entry name" value="ArgE/DapE_CS"/>
</dbReference>
<dbReference type="InterPro" id="IPR036264">
    <property type="entry name" value="Bact_exopeptidase_dim_dom"/>
</dbReference>
<dbReference type="InterPro" id="IPR002933">
    <property type="entry name" value="Peptidase_M20"/>
</dbReference>
<dbReference type="InterPro" id="IPR011650">
    <property type="entry name" value="Peptidase_M20_dimer"/>
</dbReference>
<dbReference type="InterPro" id="IPR050072">
    <property type="entry name" value="Peptidase_M20A"/>
</dbReference>
<dbReference type="NCBIfam" id="TIGR01892">
    <property type="entry name" value="AcOrn-deacetyl"/>
    <property type="match status" value="1"/>
</dbReference>
<dbReference type="NCBIfam" id="NF003474">
    <property type="entry name" value="PRK05111.1"/>
    <property type="match status" value="1"/>
</dbReference>
<dbReference type="PANTHER" id="PTHR43808">
    <property type="entry name" value="ACETYLORNITHINE DEACETYLASE"/>
    <property type="match status" value="1"/>
</dbReference>
<dbReference type="PANTHER" id="PTHR43808:SF1">
    <property type="entry name" value="ACETYLORNITHINE DEACETYLASE"/>
    <property type="match status" value="1"/>
</dbReference>
<dbReference type="Pfam" id="PF07687">
    <property type="entry name" value="M20_dimer"/>
    <property type="match status" value="1"/>
</dbReference>
<dbReference type="Pfam" id="PF01546">
    <property type="entry name" value="Peptidase_M20"/>
    <property type="match status" value="1"/>
</dbReference>
<dbReference type="SUPFAM" id="SSF55031">
    <property type="entry name" value="Bacterial exopeptidase dimerisation domain"/>
    <property type="match status" value="1"/>
</dbReference>
<dbReference type="SUPFAM" id="SSF53187">
    <property type="entry name" value="Zn-dependent exopeptidases"/>
    <property type="match status" value="1"/>
</dbReference>
<dbReference type="PROSITE" id="PS00758">
    <property type="entry name" value="ARGE_DAPE_CPG2_1"/>
    <property type="match status" value="1"/>
</dbReference>
<dbReference type="PROSITE" id="PS00759">
    <property type="entry name" value="ARGE_DAPE_CPG2_2"/>
    <property type="match status" value="1"/>
</dbReference>
<accession>Q8DCN1</accession>
<evidence type="ECO:0000255" key="1">
    <source>
        <dbReference type="HAMAP-Rule" id="MF_01108"/>
    </source>
</evidence>
<evidence type="ECO:0000305" key="2"/>
<organism>
    <name type="scientific">Vibrio vulnificus (strain CMCP6)</name>
    <dbReference type="NCBI Taxonomy" id="216895"/>
    <lineage>
        <taxon>Bacteria</taxon>
        <taxon>Pseudomonadati</taxon>
        <taxon>Pseudomonadota</taxon>
        <taxon>Gammaproteobacteria</taxon>
        <taxon>Vibrionales</taxon>
        <taxon>Vibrionaceae</taxon>
        <taxon>Vibrio</taxon>
    </lineage>
</organism>
<sequence>MQLPSFLDVYRGLISTSSISSSDPSWDQGNQAVIEKLSDWFAALGFDVDVTEVEPGKYNLLAQKGQGEGGLLLAGHSDTVPFDQGRWSFDPHQLTEKDNKFYGLGTADMKGFFAFIYEAAKRMDWKGQNKPLYVLATCDEETTMLGARHFSAHTPFKPDYCIIGEPTSLVPVRGHKGHVANVVRVTGKSGHSSDPSLGVNAIEIMHEVLFALMQLRDTLIKQYHNPGFAIPSPTLNLGHIHGGDSANRICGCCELHYDVRPLPGISLDGLDNLLRGALKEVEAKWPGRIEIVPLHEPIPGYECQHDHPFIHGIEELCGTPSQTVNYCTEAPFLQQLCPTLVLGPGSIDQAHQPDEFLAFDFIDPTIDVLSKAMRKYCF</sequence>
<gene>
    <name evidence="1" type="primary">argE</name>
    <name type="ordered locus">VV1_1370</name>
</gene>
<proteinExistence type="inferred from homology"/>
<protein>
    <recommendedName>
        <fullName evidence="1">Acetylornithine deacetylase</fullName>
        <shortName evidence="1">AO</shortName>
        <shortName evidence="1">Acetylornithinase</shortName>
        <ecNumber evidence="1">3.5.1.16</ecNumber>
    </recommendedName>
    <alternativeName>
        <fullName evidence="1">N-acetylornithinase</fullName>
        <shortName evidence="1">NAO</shortName>
    </alternativeName>
</protein>
<keyword id="KW-0028">Amino-acid biosynthesis</keyword>
<keyword id="KW-0055">Arginine biosynthesis</keyword>
<keyword id="KW-0170">Cobalt</keyword>
<keyword id="KW-0963">Cytoplasm</keyword>
<keyword id="KW-0378">Hydrolase</keyword>
<keyword id="KW-0479">Metal-binding</keyword>
<keyword id="KW-0862">Zinc</keyword>
<feature type="chain" id="PRO_0000185253" description="Acetylornithine deacetylase">
    <location>
        <begin position="1"/>
        <end position="378"/>
    </location>
</feature>
<feature type="active site" evidence="1">
    <location>
        <position position="78"/>
    </location>
</feature>
<feature type="active site" evidence="1">
    <location>
        <position position="140"/>
    </location>
</feature>
<feature type="binding site" evidence="1">
    <location>
        <position position="76"/>
    </location>
    <ligand>
        <name>Zn(2+)</name>
        <dbReference type="ChEBI" id="CHEBI:29105"/>
        <label>1</label>
    </ligand>
</feature>
<feature type="binding site" evidence="1">
    <location>
        <position position="108"/>
    </location>
    <ligand>
        <name>Zn(2+)</name>
        <dbReference type="ChEBI" id="CHEBI:29105"/>
        <label>1</label>
    </ligand>
</feature>
<feature type="binding site" evidence="1">
    <location>
        <position position="108"/>
    </location>
    <ligand>
        <name>Zn(2+)</name>
        <dbReference type="ChEBI" id="CHEBI:29105"/>
        <label>2</label>
    </ligand>
</feature>
<feature type="binding site" evidence="1">
    <location>
        <position position="141"/>
    </location>
    <ligand>
        <name>Zn(2+)</name>
        <dbReference type="ChEBI" id="CHEBI:29105"/>
        <label>2</label>
    </ligand>
</feature>
<feature type="binding site" evidence="1">
    <location>
        <position position="165"/>
    </location>
    <ligand>
        <name>Zn(2+)</name>
        <dbReference type="ChEBI" id="CHEBI:29105"/>
        <label>1</label>
    </ligand>
</feature>
<feature type="binding site" evidence="1">
    <location>
        <position position="351"/>
    </location>
    <ligand>
        <name>Zn(2+)</name>
        <dbReference type="ChEBI" id="CHEBI:29105"/>
        <label>2</label>
    </ligand>
</feature>
<reference key="1">
    <citation type="submission" date="2002-12" db="EMBL/GenBank/DDBJ databases">
        <title>Complete genome sequence of Vibrio vulnificus CMCP6.</title>
        <authorList>
            <person name="Rhee J.H."/>
            <person name="Kim S.Y."/>
            <person name="Chung S.S."/>
            <person name="Kim J.J."/>
            <person name="Moon Y.H."/>
            <person name="Jeong H."/>
            <person name="Choy H.E."/>
        </authorList>
    </citation>
    <scope>NUCLEOTIDE SEQUENCE [LARGE SCALE GENOMIC DNA]</scope>
    <source>
        <strain>CMCP6</strain>
    </source>
</reference>
<comment type="function">
    <text evidence="1">Catalyzes the hydrolysis of the amide bond of N(2)-acetylated L-amino acids. Cleaves the acetyl group from N-acetyl-L-ornithine to form L-ornithine, an intermediate in L-arginine biosynthesis pathway, and a branchpoint in the synthesis of polyamines.</text>
</comment>
<comment type="catalytic activity">
    <reaction evidence="1">
        <text>N(2)-acetyl-L-ornithine + H2O = L-ornithine + acetate</text>
        <dbReference type="Rhea" id="RHEA:15941"/>
        <dbReference type="ChEBI" id="CHEBI:15377"/>
        <dbReference type="ChEBI" id="CHEBI:30089"/>
        <dbReference type="ChEBI" id="CHEBI:46911"/>
        <dbReference type="ChEBI" id="CHEBI:57805"/>
        <dbReference type="EC" id="3.5.1.16"/>
    </reaction>
</comment>
<comment type="cofactor">
    <cofactor evidence="1">
        <name>Zn(2+)</name>
        <dbReference type="ChEBI" id="CHEBI:29105"/>
    </cofactor>
    <cofactor evidence="1">
        <name>Co(2+)</name>
        <dbReference type="ChEBI" id="CHEBI:48828"/>
    </cofactor>
    <text evidence="1">Binds 2 Zn(2+) or Co(2+) ions per subunit.</text>
</comment>
<comment type="cofactor">
    <cofactor evidence="1">
        <name>glutathione</name>
        <dbReference type="ChEBI" id="CHEBI:57925"/>
    </cofactor>
</comment>
<comment type="pathway">
    <text evidence="1">Amino-acid biosynthesis; L-arginine biosynthesis; L-ornithine from N(2)-acetyl-L-ornithine (linear): step 1/1.</text>
</comment>
<comment type="subunit">
    <text evidence="1">Homodimer.</text>
</comment>
<comment type="subcellular location">
    <subcellularLocation>
        <location evidence="1">Cytoplasm</location>
    </subcellularLocation>
</comment>
<comment type="similarity">
    <text evidence="1 2">Belongs to the peptidase M20A family. ArgE subfamily.</text>
</comment>
<name>ARGE_VIBVU</name>